<proteinExistence type="evidence at protein level"/>
<evidence type="ECO:0000250" key="1"/>
<evidence type="ECO:0000255" key="2">
    <source>
        <dbReference type="PROSITE-ProRule" id="PRU00031"/>
    </source>
</evidence>
<evidence type="ECO:0000269" key="3">
    <source>
    </source>
</evidence>
<evidence type="ECO:0000269" key="4">
    <source>
    </source>
</evidence>
<evidence type="ECO:0000269" key="5">
    <source>
    </source>
</evidence>
<evidence type="ECO:0000269" key="6">
    <source>
    </source>
</evidence>
<evidence type="ECO:0000269" key="7">
    <source>
    </source>
</evidence>
<evidence type="ECO:0000269" key="8">
    <source>
    </source>
</evidence>
<evidence type="ECO:0000269" key="9">
    <source>
    </source>
</evidence>
<evidence type="ECO:0000269" key="10">
    <source>
    </source>
</evidence>
<evidence type="ECO:0000269" key="11">
    <source>
    </source>
</evidence>
<evidence type="ECO:0000269" key="12">
    <source>
    </source>
</evidence>
<evidence type="ECO:0000303" key="13">
    <source>
    </source>
</evidence>
<evidence type="ECO:0000303" key="14">
    <source>
    </source>
</evidence>
<evidence type="ECO:0000305" key="15"/>
<evidence type="ECO:0000305" key="16">
    <source>
    </source>
</evidence>
<evidence type="ECO:0000305" key="17">
    <source>
    </source>
</evidence>
<evidence type="ECO:0000312" key="18">
    <source>
        <dbReference type="PDB" id="3BYB"/>
    </source>
</evidence>
<evidence type="ECO:0000312" key="19">
    <source>
        <dbReference type="PDB" id="3D65"/>
    </source>
</evidence>
<evidence type="ECO:0000312" key="20">
    <source>
        <dbReference type="PDB" id="3UIR"/>
    </source>
</evidence>
<evidence type="ECO:0007744" key="21">
    <source>
        <dbReference type="PDB" id="3BYB"/>
    </source>
</evidence>
<evidence type="ECO:0007744" key="22">
    <source>
        <dbReference type="PDB" id="3D65"/>
    </source>
</evidence>
<evidence type="ECO:0007744" key="23">
    <source>
        <dbReference type="PDB" id="3UIR"/>
    </source>
</evidence>
<evidence type="ECO:0007744" key="24">
    <source>
        <dbReference type="PDB" id="5ZJ3"/>
    </source>
</evidence>
<evidence type="ECO:0007829" key="25">
    <source>
        <dbReference type="PDB" id="3BYB"/>
    </source>
</evidence>
<evidence type="ECO:0007829" key="26">
    <source>
        <dbReference type="PDB" id="3D65"/>
    </source>
</evidence>
<keyword id="KW-0002">3D-structure</keyword>
<keyword id="KW-0903">Direct protein sequencing</keyword>
<keyword id="KW-1015">Disulfide bond</keyword>
<keyword id="KW-1199">Hemostasis impairing toxin</keyword>
<keyword id="KW-0582">Pharmaceutical</keyword>
<keyword id="KW-0646">Protease inhibitor</keyword>
<keyword id="KW-0964">Secreted</keyword>
<keyword id="KW-0722">Serine protease inhibitor</keyword>
<keyword id="KW-0732">Signal</keyword>
<keyword id="KW-0800">Toxin</keyword>
<organism>
    <name type="scientific">Pseudonaja textilis textilis</name>
    <name type="common">Eastern brown snake</name>
    <dbReference type="NCBI Taxonomy" id="169397"/>
    <lineage>
        <taxon>Eukaryota</taxon>
        <taxon>Metazoa</taxon>
        <taxon>Chordata</taxon>
        <taxon>Craniata</taxon>
        <taxon>Vertebrata</taxon>
        <taxon>Euteleostomi</taxon>
        <taxon>Lepidosauria</taxon>
        <taxon>Squamata</taxon>
        <taxon>Bifurcata</taxon>
        <taxon>Unidentata</taxon>
        <taxon>Episquamata</taxon>
        <taxon>Toxicofera</taxon>
        <taxon>Serpentes</taxon>
        <taxon>Colubroidea</taxon>
        <taxon>Elapidae</taxon>
        <taxon>Hydrophiinae</taxon>
        <taxon>Pseudonaja</taxon>
    </lineage>
</organism>
<feature type="signal peptide" evidence="3">
    <location>
        <begin position="1"/>
        <end position="24"/>
    </location>
</feature>
<feature type="chain" id="PRO_0000376901" description="Kunitz-type serine protease inhibitor textilinin-1">
    <location>
        <begin position="25"/>
        <end position="83"/>
    </location>
</feature>
<feature type="domain" description="BPTI/Kunitz inhibitor" evidence="2">
    <location>
        <begin position="31"/>
        <end position="81"/>
    </location>
</feature>
<feature type="site" description="Reactive bond for trypsin" evidence="1">
    <location>
        <begin position="41"/>
        <end position="42"/>
    </location>
</feature>
<feature type="disulfide bond" evidence="6 8 11 21 22 23 24">
    <location>
        <begin position="31"/>
        <end position="81"/>
    </location>
</feature>
<feature type="disulfide bond" evidence="6 8 11 21 22 23 24">
    <location>
        <begin position="40"/>
        <end position="64"/>
    </location>
</feature>
<feature type="disulfide bond" evidence="6 8 11 21 22 23 24">
    <location>
        <begin position="56"/>
        <end position="77"/>
    </location>
</feature>
<feature type="helix" evidence="25">
    <location>
        <begin position="29"/>
        <end position="32"/>
    </location>
</feature>
<feature type="strand" evidence="25">
    <location>
        <begin position="44"/>
        <end position="50"/>
    </location>
</feature>
<feature type="turn" evidence="25">
    <location>
        <begin position="51"/>
        <end position="54"/>
    </location>
</feature>
<feature type="strand" evidence="25">
    <location>
        <begin position="55"/>
        <end position="61"/>
    </location>
</feature>
<feature type="strand" evidence="26">
    <location>
        <begin position="63"/>
        <end position="65"/>
    </location>
</feature>
<feature type="strand" evidence="25">
    <location>
        <begin position="71"/>
        <end position="73"/>
    </location>
</feature>
<feature type="helix" evidence="25">
    <location>
        <begin position="74"/>
        <end position="81"/>
    </location>
</feature>
<sequence>MSSGGLLLLLGLLTLWEVLTPVSSKDRPDFCELPADTGPCRVRFPSFYYNPDEKKCLEFIYGGCEGNANNFITKEECESTCAA</sequence>
<accession>Q90WA1</accession>
<dbReference type="EMBL" id="AF402324">
    <property type="protein sequence ID" value="AAK95519.1"/>
    <property type="molecule type" value="mRNA"/>
</dbReference>
<dbReference type="PDB" id="3BYB">
    <property type="method" value="X-ray"/>
    <property type="resolution" value="1.63 A"/>
    <property type="chains" value="A/B/C=25-83"/>
</dbReference>
<dbReference type="PDB" id="3D65">
    <property type="method" value="X-ray"/>
    <property type="resolution" value="1.64 A"/>
    <property type="chains" value="I=27-83"/>
</dbReference>
<dbReference type="PDB" id="3UIR">
    <property type="method" value="X-ray"/>
    <property type="resolution" value="2.78 A"/>
    <property type="chains" value="C/D=25-83"/>
</dbReference>
<dbReference type="PDB" id="5ZJ3">
    <property type="method" value="X-ray"/>
    <property type="resolution" value="1.88 A"/>
    <property type="chains" value="A/B/C=25-83"/>
</dbReference>
<dbReference type="PDBsum" id="3BYB"/>
<dbReference type="PDBsum" id="3D65"/>
<dbReference type="PDBsum" id="3UIR"/>
<dbReference type="PDBsum" id="5ZJ3"/>
<dbReference type="SMR" id="Q90WA1"/>
<dbReference type="MEROPS" id="I02.052"/>
<dbReference type="EvolutionaryTrace" id="Q90WA1"/>
<dbReference type="GO" id="GO:0005615">
    <property type="term" value="C:extracellular space"/>
    <property type="evidence" value="ECO:0007669"/>
    <property type="project" value="TreeGrafter"/>
</dbReference>
<dbReference type="GO" id="GO:0004867">
    <property type="term" value="F:serine-type endopeptidase inhibitor activity"/>
    <property type="evidence" value="ECO:0000314"/>
    <property type="project" value="CACAO"/>
</dbReference>
<dbReference type="GO" id="GO:0090729">
    <property type="term" value="F:toxin activity"/>
    <property type="evidence" value="ECO:0007669"/>
    <property type="project" value="UniProtKB-KW"/>
</dbReference>
<dbReference type="GO" id="GO:0044469">
    <property type="term" value="P:venom-mediated blood coagulation"/>
    <property type="evidence" value="ECO:0000314"/>
    <property type="project" value="CACAO"/>
</dbReference>
<dbReference type="CDD" id="cd22594">
    <property type="entry name" value="Kunitz_textilinin-like"/>
    <property type="match status" value="1"/>
</dbReference>
<dbReference type="FunFam" id="4.10.410.10:FF:000021">
    <property type="entry name" value="Serine protease inhibitor, putative"/>
    <property type="match status" value="1"/>
</dbReference>
<dbReference type="Gene3D" id="4.10.410.10">
    <property type="entry name" value="Pancreatic trypsin inhibitor Kunitz domain"/>
    <property type="match status" value="1"/>
</dbReference>
<dbReference type="InterPro" id="IPR002223">
    <property type="entry name" value="Kunitz_BPTI"/>
</dbReference>
<dbReference type="InterPro" id="IPR036880">
    <property type="entry name" value="Kunitz_BPTI_sf"/>
</dbReference>
<dbReference type="InterPro" id="IPR020901">
    <property type="entry name" value="Prtase_inh_Kunz-CS"/>
</dbReference>
<dbReference type="InterPro" id="IPR050098">
    <property type="entry name" value="TFPI/VKTCI-like"/>
</dbReference>
<dbReference type="PANTHER" id="PTHR10083">
    <property type="entry name" value="KUNITZ-TYPE PROTEASE INHIBITOR-RELATED"/>
    <property type="match status" value="1"/>
</dbReference>
<dbReference type="PANTHER" id="PTHR10083:SF376">
    <property type="entry name" value="SERINE PEPTIDASE INHIBITOR, KUNITZ TYPE, 3"/>
    <property type="match status" value="1"/>
</dbReference>
<dbReference type="Pfam" id="PF00014">
    <property type="entry name" value="Kunitz_BPTI"/>
    <property type="match status" value="1"/>
</dbReference>
<dbReference type="PRINTS" id="PR00759">
    <property type="entry name" value="BASICPTASE"/>
</dbReference>
<dbReference type="SMART" id="SM00131">
    <property type="entry name" value="KU"/>
    <property type="match status" value="1"/>
</dbReference>
<dbReference type="SUPFAM" id="SSF57362">
    <property type="entry name" value="BPTI-like"/>
    <property type="match status" value="1"/>
</dbReference>
<dbReference type="PROSITE" id="PS00280">
    <property type="entry name" value="BPTI_KUNITZ_1"/>
    <property type="match status" value="1"/>
</dbReference>
<dbReference type="PROSITE" id="PS50279">
    <property type="entry name" value="BPTI_KUNITZ_2"/>
    <property type="match status" value="1"/>
</dbReference>
<reference key="1">
    <citation type="journal article" date="2002" name="Br. J. Haematol.">
        <title>A family of textilinin genes, two of which encode proteins with antihaemorrhagic properties.</title>
        <authorList>
            <person name="Filippovich I."/>
            <person name="Sorokina N."/>
            <person name="Masci P.P."/>
            <person name="de Jersey J."/>
            <person name="Whitaker A.N."/>
            <person name="Winzor D.J."/>
            <person name="Gaffney P.J."/>
            <person name="Lavin M.F."/>
        </authorList>
    </citation>
    <scope>NUCLEOTIDE SEQUENCE [MRNA]</scope>
    <scope>FUNCTION</scope>
    <source>
        <tissue>Venom gland</tissue>
    </source>
</reference>
<reference key="2">
    <citation type="journal article" date="2000" name="Blood Coagul. Fibrinolysis">
        <title>Textilinins from Pseudonaja textilis textilis. Characterization of two plasmin inhibitors that reduce bleeding in an animal model.</title>
        <authorList>
            <person name="Masci P.P."/>
            <person name="Whitaker A.N."/>
            <person name="Sparrow L.G."/>
            <person name="de Jersey J."/>
            <person name="Winzor D.J."/>
            <person name="Watters D.J."/>
            <person name="Lavin M.F."/>
            <person name="Gaffney P.J."/>
        </authorList>
    </citation>
    <scope>PROTEIN SEQUENCE OF 25-83</scope>
    <scope>FUNCTION</scope>
    <scope>MASS SPECTROMETRY</scope>
    <scope>SUBCELLULAR LOCATION</scope>
    <source>
        <tissue>Venom</tissue>
    </source>
</reference>
<reference key="3">
    <citation type="journal article" date="2005" name="Pathophysiol. Haemost. Thromb.">
        <title>Comparison of textilinin-1 with aprotinin as serine protease inhibitors and as antifibrinolytic agents.</title>
        <authorList>
            <person name="Flight S."/>
            <person name="Johnson L."/>
            <person name="Trabi M."/>
            <person name="Gaffney P."/>
            <person name="Lavin M."/>
            <person name="de Jersey J."/>
            <person name="Masci P."/>
        </authorList>
    </citation>
    <scope>FUNCTION</scope>
</reference>
<reference key="4">
    <citation type="journal article" date="2009" name="Br. J. Haematol.">
        <title>Textilinin-1, an alternative anti-bleeding agent to aprotinin: importance of plasmin inhibition in controlling blood loss.</title>
        <authorList>
            <person name="Flight S.M."/>
            <person name="Johnson L.A."/>
            <person name="Du Q.S."/>
            <person name="Warner R.L."/>
            <person name="Trabi M."/>
            <person name="Gaffney P.J."/>
            <person name="Lavin M.F."/>
            <person name="de Jersey J."/>
            <person name="Masci P.P."/>
        </authorList>
    </citation>
    <scope>FUNCTION</scope>
</reference>
<reference key="5">
    <citation type="journal article" date="2012" name="Biochimie">
        <title>Identification and characterisation of Kunitz-type plasma kallikrein inhibitors unique to Oxyuranus sp. snake venoms.</title>
        <authorList>
            <person name="Earl S.T."/>
            <person name="Richards R."/>
            <person name="Johnson L.A."/>
            <person name="Flight S."/>
            <person name="Anderson S."/>
            <person name="Liao A."/>
            <person name="de Jersey J."/>
            <person name="Masci P.P."/>
            <person name="Lavin M.F."/>
        </authorList>
    </citation>
    <scope>FUNCTION</scope>
</reference>
<reference key="6">
    <citation type="journal article" date="2012" name="Toxicon">
        <title>Drug development from Australian elapid snake venoms and the Venomics pipeline of candidates for haemostasis: Textilinin-1 (Q8008), Haempatch (Q8009) and CoVase (V0801).</title>
        <authorList>
            <person name="Earl S.T."/>
            <person name="Masci P.P."/>
            <person name="de Jersey J."/>
            <person name="Lavin M.F."/>
            <person name="Dixon J."/>
        </authorList>
    </citation>
    <scope>BIOTECHNOLOGY</scope>
</reference>
<reference key="7">
    <citation type="journal article" date="2006" name="Mol. Cell. Proteomics">
        <title>Molecular diversity in venom from the Australian Brown snake, Pseudonaja textilis.</title>
        <authorList>
            <person name="Birrell G.W."/>
            <person name="Earl S."/>
            <person name="Masci P.P."/>
            <person name="de Jersey J."/>
            <person name="Wallis T.P."/>
            <person name="Gorman J.J."/>
            <person name="Lavin M.F."/>
        </authorList>
    </citation>
    <scope>IDENTIFICATION BY MASS SPECTROMETRY</scope>
    <source>
        <tissue>Venom</tissue>
    </source>
</reference>
<reference key="8">
    <citation type="journal article" date="2022" name="Adv. Healthc. Mater.">
        <title>Snake venom hydrogels as a rapid hemostatic agent for uncontrolled bleeding.</title>
        <authorList>
            <person name="Yegappan R."/>
            <person name="Lauko J."/>
            <person name="Wang Z."/>
            <person name="Lavin M.F."/>
            <person name="Kijas A.W."/>
            <person name="Rowan A.E."/>
        </authorList>
    </citation>
    <scope>BIOTECHNOLOGY</scope>
</reference>
<reference key="9">
    <citation type="journal article" date="2006" name="Acta Crystallogr. F">
        <title>Crystallization and preliminary X-ray analysis of a Kunitz-type inhibitor, textilinin-1 from Pseudonaja textilis textilis.</title>
        <authorList>
            <person name="Millers E.-K.I."/>
            <person name="Masci P.P."/>
            <person name="Lavin M.F."/>
            <person name="de Jersey J."/>
            <person name="Guddat L.W."/>
        </authorList>
    </citation>
    <scope>X-RAY CRYSTALLOGRAPHY (2.4 ANGSTROMS)</scope>
    <scope>DISULFIDE BONDS</scope>
</reference>
<reference evidence="18 19" key="10">
    <citation type="journal article" date="2009" name="FEBS J.">
        <title>Crystal structure of textilinin-1, a Kunitz-type serine protease inhibitor from the venom of the Australian common brown snake (Pseudonaja textilis).</title>
        <authorList>
            <person name="Millers E.K."/>
            <person name="Trabi M."/>
            <person name="Masci P.P."/>
            <person name="Lavin M.F."/>
            <person name="de Jersey J."/>
            <person name="Guddat L.W."/>
        </authorList>
    </citation>
    <scope>X-RAY CRYSTALLOGRAPHY (1.63 ANGSTROMS) OF 25-83</scope>
    <scope>DISULFIDE BONDS</scope>
</reference>
<reference evidence="20" key="11">
    <citation type="journal article" date="2013" name="PLoS ONE">
        <title>The structure of human microplasmin in complex with textilinin-1, an aprotinin-like inhibitor from the Australian brown snake.</title>
        <authorList>
            <person name="Millers E.K."/>
            <person name="Johnson L.A."/>
            <person name="Birrell G.W."/>
            <person name="Masci P.P."/>
            <person name="Lavin M.F."/>
            <person name="de Jersey J."/>
            <person name="Guddat L.W."/>
        </authorList>
    </citation>
    <scope>X-RAY CRYSTALLOGRAPHY (1.64 ANGSTROMS) OF 25-83 IN COMPLEXES WITH THE PROTEASE DOMAIN OF HUMAN PLASMIN AND WITH TRYPSIN</scope>
    <scope>FUNCTION</scope>
    <scope>DISULFIDE BONDS</scope>
</reference>
<protein>
    <recommendedName>
        <fullName evidence="13 14">Kunitz-type serine protease inhibitor textilinin-1</fullName>
        <shortName evidence="13 14">Txln-1</shortName>
    </recommendedName>
</protein>
<name>VKT1_PSETT</name>
<comment type="function">
    <text evidence="3 4 5 7 10 11">Strongly inhibits plasmin (Ki=0.44 nM) and trypsin (Ki=0.42 nM). Has little effect on plasma (Ki=1870 nM) and tissue (Ki=12900 nM) kallikreins. Its plasmin-inhibiting activity makes it an antifibrinolytic agent. In vivo, reduces blood loss in a mouse tail vein bleeding model.</text>
</comment>
<comment type="subcellular location">
    <subcellularLocation>
        <location evidence="3">Secreted</location>
    </subcellularLocation>
</comment>
<comment type="tissue specificity">
    <text evidence="16">Expressed by the venom gland.</text>
</comment>
<comment type="mass spectrometry"/>
<comment type="biotechnology">
    <text evidence="9 12">Could be used in a hydrogel with the procoagulant venom protein ecarin (AC Q90495) to greatly reduce bleeding (PubMed:35652565). Was under preclinical trial by the Australian biopharmaceutical company QRxPharma Ltd, its subsidiary Venomics Pty Ltd (VPL) and the University of Queensland (UQ) under the name textilinin-1 (Q8008). Tested as a potent and selective plasmin inhibitor that has application as an antifibrinolytic agent to reduce blood loss associated with complex surgeries. It is being investigated as an alternative treatment to aprotinin (Trasylol) (PubMed:21184772).</text>
</comment>
<comment type="miscellaneous">
    <text evidence="17">Negative results: has no effect on tissue plasminogen inhibitor (tPA/PLAT), urokinase, activated protein C (APC), elastase, factor Xa, alpha-factor XIIa, thrombin, and factor VIIa.</text>
</comment>
<comment type="similarity">
    <text evidence="15">Belongs to the venom Kunitz-type family.</text>
</comment>